<sequence>MKEYKVYLERARSRQQDFLYPLLFREYIYGLAYSHNLNRSIFLENVGYDNKYSLLIVKRLITRMYQQNHLIISANDSNKNRFWGYNKNLDSQIISEGFAIVVEIPFLRQLSSSLEEAEILQSYKNLRSIHSIFPFLEDKFTYLNYVSDIRIPYPIHLEILVQILRYWVKDAPFFHLLRLFLYNFCNWNSFITTRKWISTFSKSNPRLFLFLHNFYVCEYESIFVFLRTKSSHLRFKSFSVFFERIFFYAKREHLEKVFYKDFSYPLTFFKDLNIHYVRYQGKCILASKNAPFWMNKWKHYFIHLWQCFFDVWSQPRMININPLSEHSFQLLGYFLNVRLNRSVVRSQMLQNTFLIEIVIQNLDIIVPIIPLIRSLANAKFCNILGEPISKPVWADSSDFDIIDRFLRICRNLSHYYNGSSKKKSLYRIKYILRLSCIKTLACKHKSTVRAFLKRSGSEELLQEFFTEEEEILSLIFPRDSSTLQRLHRNRIWYLDILFSNDLVHDE</sequence>
<protein>
    <recommendedName>
        <fullName evidence="1">Maturase K</fullName>
    </recommendedName>
    <alternativeName>
        <fullName evidence="1">Intron maturase</fullName>
    </alternativeName>
</protein>
<comment type="function">
    <text evidence="1">Usually encoded in the trnK tRNA gene intron. Probably assists in splicing its own and other chloroplast group II introns.</text>
</comment>
<comment type="subcellular location">
    <subcellularLocation>
        <location>Plastid</location>
        <location>Chloroplast</location>
    </subcellularLocation>
</comment>
<comment type="similarity">
    <text evidence="1">Belongs to the intron maturase 2 family. MatK subfamily.</text>
</comment>
<evidence type="ECO:0000255" key="1">
    <source>
        <dbReference type="HAMAP-Rule" id="MF_01390"/>
    </source>
</evidence>
<geneLocation type="chloroplast"/>
<keyword id="KW-0150">Chloroplast</keyword>
<keyword id="KW-0507">mRNA processing</keyword>
<keyword id="KW-0934">Plastid</keyword>
<keyword id="KW-0694">RNA-binding</keyword>
<keyword id="KW-0819">tRNA processing</keyword>
<reference key="1">
    <citation type="book" date="2003" name="Advances in legume systematics - part 10">
        <title>Phylogenetic analyses of tribes Trifolieae and Vicieae based on sequences of the plastid gene matK (Papilionoideae: Leguminosae).</title>
        <editorList>
            <person name="Klitgaard B.B."/>
            <person name="Bruneau A."/>
        </editorList>
        <authorList>
            <person name="Steele K.P."/>
            <person name="Wojciechowski M.F."/>
        </authorList>
    </citation>
    <scope>NUCLEOTIDE SEQUENCE [GENOMIC DNA]</scope>
</reference>
<proteinExistence type="inferred from homology"/>
<accession>Q8MCR9</accession>
<organism>
    <name type="scientific">Lathyrus sativus</name>
    <name type="common">White vetchling</name>
    <dbReference type="NCBI Taxonomy" id="3860"/>
    <lineage>
        <taxon>Eukaryota</taxon>
        <taxon>Viridiplantae</taxon>
        <taxon>Streptophyta</taxon>
        <taxon>Embryophyta</taxon>
        <taxon>Tracheophyta</taxon>
        <taxon>Spermatophyta</taxon>
        <taxon>Magnoliopsida</taxon>
        <taxon>eudicotyledons</taxon>
        <taxon>Gunneridae</taxon>
        <taxon>Pentapetalae</taxon>
        <taxon>rosids</taxon>
        <taxon>fabids</taxon>
        <taxon>Fabales</taxon>
        <taxon>Fabaceae</taxon>
        <taxon>Papilionoideae</taxon>
        <taxon>50 kb inversion clade</taxon>
        <taxon>NPAAA clade</taxon>
        <taxon>Hologalegina</taxon>
        <taxon>IRL clade</taxon>
        <taxon>Fabeae</taxon>
        <taxon>Lathyrus</taxon>
    </lineage>
</organism>
<feature type="chain" id="PRO_0000143459" description="Maturase K">
    <location>
        <begin position="1"/>
        <end position="506"/>
    </location>
</feature>
<dbReference type="EMBL" id="AF522086">
    <property type="protein sequence ID" value="AAM82078.1"/>
    <property type="molecule type" value="Genomic_DNA"/>
</dbReference>
<dbReference type="RefSeq" id="YP_003587734.1">
    <property type="nucleotide sequence ID" value="NC_014063.1"/>
</dbReference>
<dbReference type="GeneID" id="9073361"/>
<dbReference type="GO" id="GO:0009507">
    <property type="term" value="C:chloroplast"/>
    <property type="evidence" value="ECO:0007669"/>
    <property type="project" value="UniProtKB-SubCell"/>
</dbReference>
<dbReference type="GO" id="GO:0003723">
    <property type="term" value="F:RNA binding"/>
    <property type="evidence" value="ECO:0007669"/>
    <property type="project" value="UniProtKB-KW"/>
</dbReference>
<dbReference type="GO" id="GO:0006397">
    <property type="term" value="P:mRNA processing"/>
    <property type="evidence" value="ECO:0007669"/>
    <property type="project" value="UniProtKB-KW"/>
</dbReference>
<dbReference type="GO" id="GO:0008380">
    <property type="term" value="P:RNA splicing"/>
    <property type="evidence" value="ECO:0007669"/>
    <property type="project" value="UniProtKB-UniRule"/>
</dbReference>
<dbReference type="GO" id="GO:0008033">
    <property type="term" value="P:tRNA processing"/>
    <property type="evidence" value="ECO:0007669"/>
    <property type="project" value="UniProtKB-KW"/>
</dbReference>
<dbReference type="HAMAP" id="MF_01390">
    <property type="entry name" value="MatK"/>
    <property type="match status" value="1"/>
</dbReference>
<dbReference type="InterPro" id="IPR024937">
    <property type="entry name" value="Domain_X"/>
</dbReference>
<dbReference type="InterPro" id="IPR002866">
    <property type="entry name" value="Maturase_MatK"/>
</dbReference>
<dbReference type="InterPro" id="IPR024942">
    <property type="entry name" value="Maturase_MatK_N"/>
</dbReference>
<dbReference type="PANTHER" id="PTHR34811">
    <property type="entry name" value="MATURASE K"/>
    <property type="match status" value="1"/>
</dbReference>
<dbReference type="PANTHER" id="PTHR34811:SF1">
    <property type="entry name" value="MATURASE K"/>
    <property type="match status" value="1"/>
</dbReference>
<dbReference type="Pfam" id="PF01348">
    <property type="entry name" value="Intron_maturas2"/>
    <property type="match status" value="1"/>
</dbReference>
<dbReference type="Pfam" id="PF01824">
    <property type="entry name" value="MatK_N"/>
    <property type="match status" value="1"/>
</dbReference>
<gene>
    <name evidence="1" type="primary">matK</name>
</gene>
<name>MATK_LATSA</name>